<protein>
    <recommendedName>
        <fullName>Alpha-elapitoxin-Oh2b</fullName>
        <shortName>Alpha-EPTX-Oh2b</shortName>
    </recommendedName>
    <alternativeName>
        <fullName>Alpha-neurotoxin</fullName>
    </alternativeName>
    <alternativeName>
        <fullName>LNTX3</fullName>
    </alternativeName>
    <alternativeName>
        <fullName>Long neurotoxin OH-6A/OH-6B</fullName>
    </alternativeName>
    <alternativeName>
        <fullName>OH-3</fullName>
    </alternativeName>
</protein>
<keyword id="KW-0008">Acetylcholine receptor inhibiting toxin</keyword>
<keyword id="KW-0903">Direct protein sequencing</keyword>
<keyword id="KW-1015">Disulfide bond</keyword>
<keyword id="KW-0872">Ion channel impairing toxin</keyword>
<keyword id="KW-0528">Neurotoxin</keyword>
<keyword id="KW-0629">Postsynaptic neurotoxin</keyword>
<keyword id="KW-0964">Secreted</keyword>
<keyword id="KW-0732">Signal</keyword>
<keyword id="KW-0800">Toxin</keyword>
<feature type="signal peptide" evidence="3 5">
    <location>
        <begin position="1"/>
        <end position="21"/>
    </location>
</feature>
<feature type="chain" id="PRO_0000093561" description="Alpha-elapitoxin-Oh2b">
    <location>
        <begin position="22"/>
        <end position="91"/>
    </location>
</feature>
<feature type="disulfide bond" evidence="1">
    <location>
        <begin position="24"/>
        <end position="41"/>
    </location>
</feature>
<feature type="disulfide bond" evidence="1">
    <location>
        <begin position="34"/>
        <end position="62"/>
    </location>
</feature>
<feature type="disulfide bond" evidence="1">
    <location>
        <begin position="47"/>
        <end position="51"/>
    </location>
</feature>
<feature type="disulfide bond" evidence="1">
    <location>
        <begin position="66"/>
        <end position="77"/>
    </location>
</feature>
<feature type="disulfide bond" evidence="1">
    <location>
        <begin position="78"/>
        <end position="83"/>
    </location>
</feature>
<name>3L26_OPHHA</name>
<proteinExistence type="evidence at protein level"/>
<accession>P82662</accession>
<accession>Q53B60</accession>
<reference key="1">
    <citation type="journal article" date="2004" name="Toxicon">
        <title>Cloning and purification of alpha-neurotoxins from king cobra (Ophiophagus hannah).</title>
        <authorList>
            <person name="He Y.-Y."/>
            <person name="Lee W.-H."/>
            <person name="Zhang Y."/>
        </authorList>
    </citation>
    <scope>NUCLEOTIDE SEQUENCE [MRNA]</scope>
    <scope>PROTEIN SEQUENCE OF 22-33</scope>
    <scope>TOXIC DOSE</scope>
    <source>
        <tissue>Venom</tissue>
        <tissue>Venom gland</tissue>
    </source>
</reference>
<reference key="2">
    <citation type="journal article" date="2006" name="Biochem. J.">
        <title>Novel genes encoding six kinds of three-finger toxins in Ophiophagus hannah (king cobra) and function characterization of two recombinant long-chain neurotoxins.</title>
        <authorList>
            <person name="Li J."/>
            <person name="Zhang H."/>
            <person name="Liu J."/>
            <person name="Xu K."/>
        </authorList>
    </citation>
    <scope>NUCLEOTIDE SEQUENCE [MRNA]</scope>
    <scope>FUNCTION</scope>
    <scope>TOXIC DOSE</scope>
    <source>
        <tissue>Venom gland</tissue>
    </source>
</reference>
<reference key="3">
    <citation type="journal article" date="1999" name="Biochem. Biophys. Res. Commun.">
        <title>Disulfide isomers of alpha-neurotoxins from King cobra (Ophiophagus hannah) venom.</title>
        <authorList>
            <person name="Lin S.-R."/>
            <person name="Chang L.-S."/>
            <person name="Chang C.-C."/>
        </authorList>
    </citation>
    <scope>PROTEIN SEQUENCE OF 22-91</scope>
    <scope>TOXIC DOSE</scope>
    <scope>SUBCELLULAR LOCATION</scope>
    <source>
        <tissue>Venom</tissue>
    </source>
</reference>
<reference key="4">
    <citation type="journal article" date="2013" name="Proc. Natl. Acad. Sci. U.S.A.">
        <title>The king cobra genome reveals dynamic gene evolution and adaptation in the snake venom system.</title>
        <authorList>
            <person name="Vonk F.J."/>
            <person name="Casewell N.R."/>
            <person name="Henkel C.V."/>
            <person name="Heimberg A.M."/>
            <person name="Jansen H.J."/>
            <person name="McCleary R.J."/>
            <person name="Kerkkamp H.M."/>
            <person name="Vos R.A."/>
            <person name="Guerreiro I."/>
            <person name="Calvete J.J."/>
            <person name="Wuster W."/>
            <person name="Woods A.E."/>
            <person name="Logan J.M."/>
            <person name="Harrison R.A."/>
            <person name="Castoe T.A."/>
            <person name="de Koning A.P."/>
            <person name="Pollock D.D."/>
            <person name="Yandell M."/>
            <person name="Calderon D."/>
            <person name="Renjifo C."/>
            <person name="Currier R.B."/>
            <person name="Salgado D."/>
            <person name="Pla D."/>
            <person name="Sanz L."/>
            <person name="Hyder A.S."/>
            <person name="Ribeiro J.M."/>
            <person name="Arntzen J.W."/>
            <person name="van den Thillart G.E."/>
            <person name="Boetzer M."/>
            <person name="Pirovano W."/>
            <person name="Dirks R.P."/>
            <person name="Spaink H.P."/>
            <person name="Duboule D."/>
            <person name="McGlinn E."/>
            <person name="Kini R.M."/>
            <person name="Richardson M.K."/>
        </authorList>
    </citation>
    <scope>IDENTIFICATION BY MASS SPECTROMETRY</scope>
    <source>
        <tissue>Venom</tissue>
    </source>
</reference>
<comment type="function">
    <text evidence="2 4">Binds with high affinity to muscular (alpha-1/CHRNA1) and neuronal (alpha-7/CHRNA7) nicotinic acetylcholine receptor (nAChR) and inhibits acetylcholine from binding to the receptor, thereby impairing neuromuscular and neuronal transmission (By similarity). Recombinant LNTX1 leads to a functional block of the muscle-type acetylcholine receptors. Has a cytotoxic activity. This neurotoxin is lethal (PubMed:16689684).</text>
</comment>
<comment type="subunit">
    <text evidence="6">Monomer.</text>
</comment>
<comment type="subcellular location">
    <subcellularLocation>
        <location evidence="5">Secreted</location>
    </subcellularLocation>
</comment>
<comment type="tissue specificity">
    <text evidence="6">Expressed by the venom gland.</text>
</comment>
<comment type="toxic dose">
    <text>LD(50) is 0.41 mg/kg by intravenous injection into mice.</text>
</comment>
<comment type="toxic dose">
    <text>LD(50) is 100 ug/kg by intraperitoneal injection into mice.</text>
</comment>
<comment type="miscellaneous">
    <text>OH-6A and OH-6B are disulfide isomers which arise from cis-trans isomerization of the Cys-47-Cys-51 disulfide bond. They differ in the retention time in reversed-phase column and the conformation.</text>
</comment>
<comment type="similarity">
    <text evidence="6">Belongs to the three-finger toxin family. Long-chain subfamily. Type II alpha-neurotoxin sub-subfamily.</text>
</comment>
<organism>
    <name type="scientific">Ophiophagus hannah</name>
    <name type="common">King cobra</name>
    <name type="synonym">Naja hannah</name>
    <dbReference type="NCBI Taxonomy" id="8665"/>
    <lineage>
        <taxon>Eukaryota</taxon>
        <taxon>Metazoa</taxon>
        <taxon>Chordata</taxon>
        <taxon>Craniata</taxon>
        <taxon>Vertebrata</taxon>
        <taxon>Euteleostomi</taxon>
        <taxon>Lepidosauria</taxon>
        <taxon>Squamata</taxon>
        <taxon>Bifurcata</taxon>
        <taxon>Unidentata</taxon>
        <taxon>Episquamata</taxon>
        <taxon>Toxicofera</taxon>
        <taxon>Serpentes</taxon>
        <taxon>Colubroidea</taxon>
        <taxon>Elapidae</taxon>
        <taxon>Elapinae</taxon>
        <taxon>Ophiophagus</taxon>
    </lineage>
</organism>
<evidence type="ECO:0000250" key="1"/>
<evidence type="ECO:0000250" key="2">
    <source>
        <dbReference type="UniProtKB" id="P60615"/>
    </source>
</evidence>
<evidence type="ECO:0000269" key="3">
    <source>
    </source>
</evidence>
<evidence type="ECO:0000269" key="4">
    <source>
    </source>
</evidence>
<evidence type="ECO:0000269" key="5">
    <source>
    </source>
</evidence>
<evidence type="ECO:0000305" key="6"/>
<dbReference type="EMBL" id="AY596926">
    <property type="protein sequence ID" value="AAT97248.1"/>
    <property type="molecule type" value="mRNA"/>
</dbReference>
<dbReference type="EMBL" id="DQ273568">
    <property type="protein sequence ID" value="ABB83622.1"/>
    <property type="molecule type" value="mRNA"/>
</dbReference>
<dbReference type="PIR" id="JG0189">
    <property type="entry name" value="JG0189"/>
</dbReference>
<dbReference type="SMR" id="P82662"/>
<dbReference type="TopDownProteomics" id="P82662"/>
<dbReference type="GO" id="GO:0005576">
    <property type="term" value="C:extracellular region"/>
    <property type="evidence" value="ECO:0007669"/>
    <property type="project" value="UniProtKB-SubCell"/>
</dbReference>
<dbReference type="GO" id="GO:0030550">
    <property type="term" value="F:acetylcholine receptor inhibitor activity"/>
    <property type="evidence" value="ECO:0007669"/>
    <property type="project" value="UniProtKB-KW"/>
</dbReference>
<dbReference type="GO" id="GO:0099106">
    <property type="term" value="F:ion channel regulator activity"/>
    <property type="evidence" value="ECO:0007669"/>
    <property type="project" value="UniProtKB-KW"/>
</dbReference>
<dbReference type="GO" id="GO:0090729">
    <property type="term" value="F:toxin activity"/>
    <property type="evidence" value="ECO:0007669"/>
    <property type="project" value="UniProtKB-KW"/>
</dbReference>
<dbReference type="CDD" id="cd00206">
    <property type="entry name" value="TFP_snake_toxin"/>
    <property type="match status" value="1"/>
</dbReference>
<dbReference type="Gene3D" id="2.10.60.10">
    <property type="entry name" value="CD59"/>
    <property type="match status" value="1"/>
</dbReference>
<dbReference type="InterPro" id="IPR003571">
    <property type="entry name" value="Snake_3FTx"/>
</dbReference>
<dbReference type="InterPro" id="IPR045860">
    <property type="entry name" value="Snake_toxin-like_sf"/>
</dbReference>
<dbReference type="InterPro" id="IPR018354">
    <property type="entry name" value="Snake_toxin_con_site"/>
</dbReference>
<dbReference type="InterPro" id="IPR054131">
    <property type="entry name" value="Toxin_cobra-type"/>
</dbReference>
<dbReference type="Pfam" id="PF21947">
    <property type="entry name" value="Toxin_cobra-type"/>
    <property type="match status" value="1"/>
</dbReference>
<dbReference type="SUPFAM" id="SSF57302">
    <property type="entry name" value="Snake toxin-like"/>
    <property type="match status" value="1"/>
</dbReference>
<dbReference type="PROSITE" id="PS00272">
    <property type="entry name" value="SNAKE_TOXIN"/>
    <property type="match status" value="1"/>
</dbReference>
<sequence>MKTLLLTLVVMTIVCLDLGYTLICFISSHDSVTCAPGENVCFLKSWCDAWCGSRGKKLSFGCAATCPKVNPGIDIECCSTDNCNPHPKLRP</sequence>